<name>BPP8A_BOTCO</name>
<sequence length="8" mass="878">QNAHPSPK</sequence>
<dbReference type="GO" id="GO:0005576">
    <property type="term" value="C:extracellular region"/>
    <property type="evidence" value="ECO:0007669"/>
    <property type="project" value="UniProtKB-SubCell"/>
</dbReference>
<dbReference type="GO" id="GO:0030414">
    <property type="term" value="F:peptidase inhibitor activity"/>
    <property type="evidence" value="ECO:0007669"/>
    <property type="project" value="UniProtKB-KW"/>
</dbReference>
<dbReference type="GO" id="GO:0090729">
    <property type="term" value="F:toxin activity"/>
    <property type="evidence" value="ECO:0007669"/>
    <property type="project" value="UniProtKB-KW"/>
</dbReference>
<dbReference type="GO" id="GO:0008217">
    <property type="term" value="P:regulation of blood pressure"/>
    <property type="evidence" value="ECO:0007669"/>
    <property type="project" value="UniProtKB-KW"/>
</dbReference>
<evidence type="ECO:0000250" key="1"/>
<evidence type="ECO:0000269" key="2">
    <source>
    </source>
</evidence>
<evidence type="ECO:0000305" key="3"/>
<keyword id="KW-0903">Direct protein sequencing</keyword>
<keyword id="KW-0382">Hypotensive agent</keyword>
<keyword id="KW-0481">Metalloenzyme inhibitor</keyword>
<keyword id="KW-0483">Metalloprotease inhibitor</keyword>
<keyword id="KW-0646">Protease inhibitor</keyword>
<keyword id="KW-0873">Pyrrolidone carboxylic acid</keyword>
<keyword id="KW-0964">Secreted</keyword>
<keyword id="KW-0800">Toxin</keyword>
<organism>
    <name type="scientific">Bothrops cotiara</name>
    <name type="common">Cotiara</name>
    <name type="synonym">Rhinocerophis cotiara</name>
    <dbReference type="NCBI Taxonomy" id="8727"/>
    <lineage>
        <taxon>Eukaryota</taxon>
        <taxon>Metazoa</taxon>
        <taxon>Chordata</taxon>
        <taxon>Craniata</taxon>
        <taxon>Vertebrata</taxon>
        <taxon>Euteleostomi</taxon>
        <taxon>Lepidosauria</taxon>
        <taxon>Squamata</taxon>
        <taxon>Bifurcata</taxon>
        <taxon>Unidentata</taxon>
        <taxon>Episquamata</taxon>
        <taxon>Toxicofera</taxon>
        <taxon>Serpentes</taxon>
        <taxon>Colubroidea</taxon>
        <taxon>Viperidae</taxon>
        <taxon>Crotalinae</taxon>
        <taxon>Bothrops</taxon>
    </lineage>
</organism>
<feature type="peptide" id="PRO_0000421902" description="Bradykinin-potentiating peptide 8a">
    <location>
        <begin position="1"/>
        <end position="8"/>
    </location>
</feature>
<feature type="modified residue" description="Pyrrolidone carboxylic acid" evidence="2">
    <location>
        <position position="1"/>
    </location>
</feature>
<feature type="unsure residue" description="K or Q">
    <location>
        <position position="8"/>
    </location>
</feature>
<comment type="function">
    <text evidence="1 2">This peptide both inhibits the activity of the angiotensin-converting enzyme (ACE) and enhances the action of bradykinin by inhibiting the peptidases that inactivate it. It acts as an indirect hypotensive agent (By similarity).</text>
</comment>
<comment type="subcellular location">
    <subcellularLocation>
        <location>Secreted</location>
    </subcellularLocation>
</comment>
<comment type="tissue specificity">
    <text>Expressed by the venom gland.</text>
</comment>
<comment type="mass spectrometry" mass="860.4" method="Electrospray" evidence="2"/>
<comment type="similarity">
    <text evidence="3">Belongs to the bradykinin-potentiating peptide family.</text>
</comment>
<accession>P0DKZ4</accession>
<proteinExistence type="evidence at protein level"/>
<reference key="1">
    <citation type="journal article" date="2012" name="Mol. Cell. Proteomics">
        <title>Peptidomics of three Bothrops snake venoms: insights into the molecular diversification of proteomes and peptidomes.</title>
        <authorList>
            <person name="Tashima A.K."/>
            <person name="Zelanis A."/>
            <person name="Kitano E.S."/>
            <person name="Ianzer D."/>
            <person name="Melo R.L."/>
            <person name="Rioli V."/>
            <person name="Sant'anna S.S."/>
            <person name="Schenberg A.C."/>
            <person name="Camargo A.C."/>
            <person name="Serrano S.M.T."/>
        </authorList>
    </citation>
    <scope>PROTEIN SEQUENCE</scope>
    <scope>FUNCTION</scope>
    <scope>PYROGLUTAMATE FORMATION AT GLN-1</scope>
    <scope>MASS SPECTROMETRY</scope>
    <source>
        <tissue>Venom</tissue>
    </source>
</reference>
<protein>
    <recommendedName>
        <fullName>Bradykinin-potentiating peptide 8a</fullName>
        <shortName>BPP-8a</shortName>
    </recommendedName>
</protein>